<sequence length="291" mass="32319">MPELPEVETVRRGLQPAMEGFRIDRAVAHRENLRFPLQKDFVARLTGQTVTGLGRRAKYLLADLSSGDVLLMHLGMSGSFRVVEADGETRPGEFHYPRSEDRTHDHVVFEMASGARVVFNDPRRFGFMKVFPRSEIETEPHLKGLGPEPLGNAFDASLLAKACAGKQTSLKAALLDQRVVAGLGNIYVCEALFRAHLSPKRKASTLANRKDEPTDHAVRLTEAIREVLGEAIKAGGSSLRDHRQTSGELGYFQHAFKVYDREGEPCPTCGGTVQRFVQNGRSTFWCPKCQK</sequence>
<proteinExistence type="inferred from homology"/>
<gene>
    <name evidence="2" type="primary">mutM</name>
    <name evidence="2" type="synonym">fpg</name>
    <name type="ordered locus">RPA0084</name>
</gene>
<accession>Q6NDM1</accession>
<comment type="function">
    <text evidence="2">Involved in base excision repair of DNA damaged by oxidation or by mutagenic agents. Acts as a DNA glycosylase that recognizes and removes damaged bases. Has a preference for oxidized purines, such as 7,8-dihydro-8-oxoguanine (8-oxoG). Has AP (apurinic/apyrimidinic) lyase activity and introduces nicks in the DNA strand. Cleaves the DNA backbone by beta-delta elimination to generate a single-strand break at the site of the removed base with both 3'- and 5'-phosphates.</text>
</comment>
<comment type="catalytic activity">
    <reaction evidence="2">
        <text>Hydrolysis of DNA containing ring-opened 7-methylguanine residues, releasing 2,6-diamino-4-hydroxy-5-(N-methyl)formamidopyrimidine.</text>
        <dbReference type="EC" id="3.2.2.23"/>
    </reaction>
</comment>
<comment type="catalytic activity">
    <reaction evidence="2">
        <text>2'-deoxyribonucleotide-(2'-deoxyribose 5'-phosphate)-2'-deoxyribonucleotide-DNA = a 3'-end 2'-deoxyribonucleotide-(2,3-dehydro-2,3-deoxyribose 5'-phosphate)-DNA + a 5'-end 5'-phospho-2'-deoxyribonucleoside-DNA + H(+)</text>
        <dbReference type="Rhea" id="RHEA:66592"/>
        <dbReference type="Rhea" id="RHEA-COMP:13180"/>
        <dbReference type="Rhea" id="RHEA-COMP:16897"/>
        <dbReference type="Rhea" id="RHEA-COMP:17067"/>
        <dbReference type="ChEBI" id="CHEBI:15378"/>
        <dbReference type="ChEBI" id="CHEBI:136412"/>
        <dbReference type="ChEBI" id="CHEBI:157695"/>
        <dbReference type="ChEBI" id="CHEBI:167181"/>
        <dbReference type="EC" id="4.2.99.18"/>
    </reaction>
</comment>
<comment type="cofactor">
    <cofactor evidence="2">
        <name>Zn(2+)</name>
        <dbReference type="ChEBI" id="CHEBI:29105"/>
    </cofactor>
    <text evidence="2">Binds 1 zinc ion per subunit.</text>
</comment>
<comment type="subunit">
    <text evidence="2">Monomer.</text>
</comment>
<comment type="similarity">
    <text evidence="2">Belongs to the FPG family.</text>
</comment>
<evidence type="ECO:0000250" key="1"/>
<evidence type="ECO:0000255" key="2">
    <source>
        <dbReference type="HAMAP-Rule" id="MF_00103"/>
    </source>
</evidence>
<dbReference type="EC" id="3.2.2.23" evidence="2"/>
<dbReference type="EC" id="4.2.99.18" evidence="2"/>
<dbReference type="EMBL" id="BX572593">
    <property type="protein sequence ID" value="CAE25528.1"/>
    <property type="molecule type" value="Genomic_DNA"/>
</dbReference>
<dbReference type="RefSeq" id="WP_011155655.1">
    <property type="nucleotide sequence ID" value="NZ_CP116810.1"/>
</dbReference>
<dbReference type="SMR" id="Q6NDM1"/>
<dbReference type="STRING" id="258594.RPA0084"/>
<dbReference type="GeneID" id="66891085"/>
<dbReference type="eggNOG" id="COG0266">
    <property type="taxonomic scope" value="Bacteria"/>
</dbReference>
<dbReference type="HOGENOM" id="CLU_038423_1_1_5"/>
<dbReference type="PhylomeDB" id="Q6NDM1"/>
<dbReference type="GO" id="GO:0034039">
    <property type="term" value="F:8-oxo-7,8-dihydroguanine DNA N-glycosylase activity"/>
    <property type="evidence" value="ECO:0007669"/>
    <property type="project" value="TreeGrafter"/>
</dbReference>
<dbReference type="GO" id="GO:0140078">
    <property type="term" value="F:class I DNA-(apurinic or apyrimidinic site) endonuclease activity"/>
    <property type="evidence" value="ECO:0007669"/>
    <property type="project" value="UniProtKB-EC"/>
</dbReference>
<dbReference type="GO" id="GO:0003684">
    <property type="term" value="F:damaged DNA binding"/>
    <property type="evidence" value="ECO:0007669"/>
    <property type="project" value="InterPro"/>
</dbReference>
<dbReference type="GO" id="GO:0008270">
    <property type="term" value="F:zinc ion binding"/>
    <property type="evidence" value="ECO:0007669"/>
    <property type="project" value="UniProtKB-UniRule"/>
</dbReference>
<dbReference type="GO" id="GO:0006284">
    <property type="term" value="P:base-excision repair"/>
    <property type="evidence" value="ECO:0007669"/>
    <property type="project" value="InterPro"/>
</dbReference>
<dbReference type="CDD" id="cd08966">
    <property type="entry name" value="EcFpg-like_N"/>
    <property type="match status" value="1"/>
</dbReference>
<dbReference type="FunFam" id="1.10.8.50:FF:000003">
    <property type="entry name" value="Formamidopyrimidine-DNA glycosylase"/>
    <property type="match status" value="1"/>
</dbReference>
<dbReference type="FunFam" id="3.20.190.10:FF:000001">
    <property type="entry name" value="Formamidopyrimidine-DNA glycosylase"/>
    <property type="match status" value="1"/>
</dbReference>
<dbReference type="Gene3D" id="1.10.8.50">
    <property type="match status" value="1"/>
</dbReference>
<dbReference type="Gene3D" id="3.20.190.10">
    <property type="entry name" value="MutM-like, N-terminal"/>
    <property type="match status" value="1"/>
</dbReference>
<dbReference type="HAMAP" id="MF_00103">
    <property type="entry name" value="Fapy_DNA_glycosyl"/>
    <property type="match status" value="1"/>
</dbReference>
<dbReference type="InterPro" id="IPR015886">
    <property type="entry name" value="DNA_glyclase/AP_lyase_DNA-bd"/>
</dbReference>
<dbReference type="InterPro" id="IPR015887">
    <property type="entry name" value="DNA_glyclase_Znf_dom_DNA_BS"/>
</dbReference>
<dbReference type="InterPro" id="IPR020629">
    <property type="entry name" value="Formamido-pyr_DNA_Glyclase"/>
</dbReference>
<dbReference type="InterPro" id="IPR012319">
    <property type="entry name" value="FPG_cat"/>
</dbReference>
<dbReference type="InterPro" id="IPR035937">
    <property type="entry name" value="MutM-like_N-ter"/>
</dbReference>
<dbReference type="InterPro" id="IPR010979">
    <property type="entry name" value="Ribosomal_uS13-like_H2TH"/>
</dbReference>
<dbReference type="InterPro" id="IPR000214">
    <property type="entry name" value="Znf_DNA_glyclase/AP_lyase"/>
</dbReference>
<dbReference type="InterPro" id="IPR010663">
    <property type="entry name" value="Znf_FPG/IleRS"/>
</dbReference>
<dbReference type="NCBIfam" id="TIGR00577">
    <property type="entry name" value="fpg"/>
    <property type="match status" value="1"/>
</dbReference>
<dbReference type="NCBIfam" id="NF002211">
    <property type="entry name" value="PRK01103.1"/>
    <property type="match status" value="1"/>
</dbReference>
<dbReference type="PANTHER" id="PTHR22993">
    <property type="entry name" value="FORMAMIDOPYRIMIDINE-DNA GLYCOSYLASE"/>
    <property type="match status" value="1"/>
</dbReference>
<dbReference type="PANTHER" id="PTHR22993:SF9">
    <property type="entry name" value="FORMAMIDOPYRIMIDINE-DNA GLYCOSYLASE"/>
    <property type="match status" value="1"/>
</dbReference>
<dbReference type="Pfam" id="PF01149">
    <property type="entry name" value="Fapy_DNA_glyco"/>
    <property type="match status" value="1"/>
</dbReference>
<dbReference type="Pfam" id="PF06831">
    <property type="entry name" value="H2TH"/>
    <property type="match status" value="1"/>
</dbReference>
<dbReference type="Pfam" id="PF06827">
    <property type="entry name" value="zf-FPG_IleRS"/>
    <property type="match status" value="1"/>
</dbReference>
<dbReference type="SMART" id="SM00898">
    <property type="entry name" value="Fapy_DNA_glyco"/>
    <property type="match status" value="1"/>
</dbReference>
<dbReference type="SMART" id="SM01232">
    <property type="entry name" value="H2TH"/>
    <property type="match status" value="1"/>
</dbReference>
<dbReference type="SUPFAM" id="SSF57716">
    <property type="entry name" value="Glucocorticoid receptor-like (DNA-binding domain)"/>
    <property type="match status" value="1"/>
</dbReference>
<dbReference type="SUPFAM" id="SSF81624">
    <property type="entry name" value="N-terminal domain of MutM-like DNA repair proteins"/>
    <property type="match status" value="1"/>
</dbReference>
<dbReference type="SUPFAM" id="SSF46946">
    <property type="entry name" value="S13-like H2TH domain"/>
    <property type="match status" value="1"/>
</dbReference>
<dbReference type="PROSITE" id="PS51068">
    <property type="entry name" value="FPG_CAT"/>
    <property type="match status" value="1"/>
</dbReference>
<dbReference type="PROSITE" id="PS01242">
    <property type="entry name" value="ZF_FPG_1"/>
    <property type="match status" value="1"/>
</dbReference>
<dbReference type="PROSITE" id="PS51066">
    <property type="entry name" value="ZF_FPG_2"/>
    <property type="match status" value="1"/>
</dbReference>
<protein>
    <recommendedName>
        <fullName evidence="2">Formamidopyrimidine-DNA glycosylase</fullName>
        <shortName evidence="2">Fapy-DNA glycosylase</shortName>
        <ecNumber evidence="2">3.2.2.23</ecNumber>
    </recommendedName>
    <alternativeName>
        <fullName evidence="2">DNA-(apurinic or apyrimidinic site) lyase MutM</fullName>
        <shortName evidence="2">AP lyase MutM</shortName>
        <ecNumber evidence="2">4.2.99.18</ecNumber>
    </alternativeName>
</protein>
<feature type="initiator methionine" description="Removed" evidence="1">
    <location>
        <position position="1"/>
    </location>
</feature>
<feature type="chain" id="PRO_0000228465" description="Formamidopyrimidine-DNA glycosylase">
    <location>
        <begin position="2"/>
        <end position="291"/>
    </location>
</feature>
<feature type="zinc finger region" description="FPG-type" evidence="2">
    <location>
        <begin position="257"/>
        <end position="291"/>
    </location>
</feature>
<feature type="active site" description="Schiff-base intermediate with DNA" evidence="2">
    <location>
        <position position="2"/>
    </location>
</feature>
<feature type="active site" description="Proton donor" evidence="2">
    <location>
        <position position="3"/>
    </location>
</feature>
<feature type="active site" description="Proton donor; for beta-elimination activity" evidence="2">
    <location>
        <position position="58"/>
    </location>
</feature>
<feature type="active site" description="Proton donor; for delta-elimination activity" evidence="2">
    <location>
        <position position="281"/>
    </location>
</feature>
<feature type="binding site" evidence="2">
    <location>
        <position position="104"/>
    </location>
    <ligand>
        <name>DNA</name>
        <dbReference type="ChEBI" id="CHEBI:16991"/>
    </ligand>
</feature>
<feature type="binding site" evidence="2">
    <location>
        <position position="123"/>
    </location>
    <ligand>
        <name>DNA</name>
        <dbReference type="ChEBI" id="CHEBI:16991"/>
    </ligand>
</feature>
<feature type="binding site" evidence="2">
    <location>
        <position position="166"/>
    </location>
    <ligand>
        <name>DNA</name>
        <dbReference type="ChEBI" id="CHEBI:16991"/>
    </ligand>
</feature>
<name>FPG_RHOPA</name>
<keyword id="KW-0227">DNA damage</keyword>
<keyword id="KW-0234">DNA repair</keyword>
<keyword id="KW-0238">DNA-binding</keyword>
<keyword id="KW-0326">Glycosidase</keyword>
<keyword id="KW-0378">Hydrolase</keyword>
<keyword id="KW-0456">Lyase</keyword>
<keyword id="KW-0479">Metal-binding</keyword>
<keyword id="KW-0511">Multifunctional enzyme</keyword>
<keyword id="KW-0862">Zinc</keyword>
<keyword id="KW-0863">Zinc-finger</keyword>
<reference key="1">
    <citation type="journal article" date="2004" name="Nat. Biotechnol.">
        <title>Complete genome sequence of the metabolically versatile photosynthetic bacterium Rhodopseudomonas palustris.</title>
        <authorList>
            <person name="Larimer F.W."/>
            <person name="Chain P."/>
            <person name="Hauser L."/>
            <person name="Lamerdin J.E."/>
            <person name="Malfatti S."/>
            <person name="Do L."/>
            <person name="Land M.L."/>
            <person name="Pelletier D.A."/>
            <person name="Beatty J.T."/>
            <person name="Lang A.S."/>
            <person name="Tabita F.R."/>
            <person name="Gibson J.L."/>
            <person name="Hanson T.E."/>
            <person name="Bobst C."/>
            <person name="Torres y Torres J.L."/>
            <person name="Peres C."/>
            <person name="Harrison F.H."/>
            <person name="Gibson J."/>
            <person name="Harwood C.S."/>
        </authorList>
    </citation>
    <scope>NUCLEOTIDE SEQUENCE [LARGE SCALE GENOMIC DNA]</scope>
    <source>
        <strain>ATCC BAA-98 / CGA009</strain>
    </source>
</reference>
<organism>
    <name type="scientific">Rhodopseudomonas palustris (strain ATCC BAA-98 / CGA009)</name>
    <dbReference type="NCBI Taxonomy" id="258594"/>
    <lineage>
        <taxon>Bacteria</taxon>
        <taxon>Pseudomonadati</taxon>
        <taxon>Pseudomonadota</taxon>
        <taxon>Alphaproteobacteria</taxon>
        <taxon>Hyphomicrobiales</taxon>
        <taxon>Nitrobacteraceae</taxon>
        <taxon>Rhodopseudomonas</taxon>
    </lineage>
</organism>